<comment type="function">
    <text evidence="1">Probable gustatory receptor which mediates acceptance or avoidance behavior, depending on its substrates.</text>
</comment>
<comment type="subcellular location">
    <subcellularLocation>
        <location evidence="1">Cell membrane</location>
        <topology evidence="1">Multi-pass membrane protein</topology>
    </subcellularLocation>
</comment>
<comment type="tissue specificity">
    <text evidence="4">Expressed in neurons of the terminal external chemosensory organ of larvae.</text>
</comment>
<comment type="similarity">
    <text evidence="5">Belongs to the insect chemoreceptor superfamily. Gustatory receptor (GR) family. Gr22e subfamily.</text>
</comment>
<name>GR36B_DROME</name>
<sequence>MVDWVVLLLKAVHIYCYLIGLSNFEFDCRTGRVFKSRRCTIYAFMANIFILITIIYNFTAHGDTNLLFQSANKLHEYVIIIMSGLKIVAGLITVLNRWLQRGQMMQLVKDVIRLYMINPQLKSMIRWGILLKAFISFAIELLQVTLSVDALDRQGTAEMMGLLVKLCVSFIMNLAISQHFLVILLIRAQYRIMNAKLRMVIEESRRLSFLQLRNGAFMTRCCYLSDQLEDIGEVQSQLQSMVGQLDEVFGMQGLMAYSEYYLSIVGTSYMSYSIYKYGPHNLKLSAKTSIIVCILITLFYLDALVNCNNMLRVLDHHKDFLGLLEERTVFASSLDIRLEESFESLQLQLARNPLKINVMGMFPITRGSTAAMCASVIVNSIFLIQFDMEFF</sequence>
<gene>
    <name type="primary">Gr36b</name>
    <name type="ORF">CG31744</name>
</gene>
<organism evidence="6">
    <name type="scientific">Drosophila melanogaster</name>
    <name type="common">Fruit fly</name>
    <dbReference type="NCBI Taxonomy" id="7227"/>
    <lineage>
        <taxon>Eukaryota</taxon>
        <taxon>Metazoa</taxon>
        <taxon>Ecdysozoa</taxon>
        <taxon>Arthropoda</taxon>
        <taxon>Hexapoda</taxon>
        <taxon>Insecta</taxon>
        <taxon>Pterygota</taxon>
        <taxon>Neoptera</taxon>
        <taxon>Endopterygota</taxon>
        <taxon>Diptera</taxon>
        <taxon>Brachycera</taxon>
        <taxon>Muscomorpha</taxon>
        <taxon>Ephydroidea</taxon>
        <taxon>Drosophilidae</taxon>
        <taxon>Drosophila</taxon>
        <taxon>Sophophora</taxon>
    </lineage>
</organism>
<reference evidence="5" key="1">
    <citation type="journal article" date="2000" name="Science">
        <title>The genome sequence of Drosophila melanogaster.</title>
        <authorList>
            <person name="Adams M.D."/>
            <person name="Celniker S.E."/>
            <person name="Holt R.A."/>
            <person name="Evans C.A."/>
            <person name="Gocayne J.D."/>
            <person name="Amanatides P.G."/>
            <person name="Scherer S.E."/>
            <person name="Li P.W."/>
            <person name="Hoskins R.A."/>
            <person name="Galle R.F."/>
            <person name="George R.A."/>
            <person name="Lewis S.E."/>
            <person name="Richards S."/>
            <person name="Ashburner M."/>
            <person name="Henderson S.N."/>
            <person name="Sutton G.G."/>
            <person name="Wortman J.R."/>
            <person name="Yandell M.D."/>
            <person name="Zhang Q."/>
            <person name="Chen L.X."/>
            <person name="Brandon R.C."/>
            <person name="Rogers Y.-H.C."/>
            <person name="Blazej R.G."/>
            <person name="Champe M."/>
            <person name="Pfeiffer B.D."/>
            <person name="Wan K.H."/>
            <person name="Doyle C."/>
            <person name="Baxter E.G."/>
            <person name="Helt G."/>
            <person name="Nelson C.R."/>
            <person name="Miklos G.L.G."/>
            <person name="Abril J.F."/>
            <person name="Agbayani A."/>
            <person name="An H.-J."/>
            <person name="Andrews-Pfannkoch C."/>
            <person name="Baldwin D."/>
            <person name="Ballew R.M."/>
            <person name="Basu A."/>
            <person name="Baxendale J."/>
            <person name="Bayraktaroglu L."/>
            <person name="Beasley E.M."/>
            <person name="Beeson K.Y."/>
            <person name="Benos P.V."/>
            <person name="Berman B.P."/>
            <person name="Bhandari D."/>
            <person name="Bolshakov S."/>
            <person name="Borkova D."/>
            <person name="Botchan M.R."/>
            <person name="Bouck J."/>
            <person name="Brokstein P."/>
            <person name="Brottier P."/>
            <person name="Burtis K.C."/>
            <person name="Busam D.A."/>
            <person name="Butler H."/>
            <person name="Cadieu E."/>
            <person name="Center A."/>
            <person name="Chandra I."/>
            <person name="Cherry J.M."/>
            <person name="Cawley S."/>
            <person name="Dahlke C."/>
            <person name="Davenport L.B."/>
            <person name="Davies P."/>
            <person name="de Pablos B."/>
            <person name="Delcher A."/>
            <person name="Deng Z."/>
            <person name="Mays A.D."/>
            <person name="Dew I."/>
            <person name="Dietz S.M."/>
            <person name="Dodson K."/>
            <person name="Doup L.E."/>
            <person name="Downes M."/>
            <person name="Dugan-Rocha S."/>
            <person name="Dunkov B.C."/>
            <person name="Dunn P."/>
            <person name="Durbin K.J."/>
            <person name="Evangelista C.C."/>
            <person name="Ferraz C."/>
            <person name="Ferriera S."/>
            <person name="Fleischmann W."/>
            <person name="Fosler C."/>
            <person name="Gabrielian A.E."/>
            <person name="Garg N.S."/>
            <person name="Gelbart W.M."/>
            <person name="Glasser K."/>
            <person name="Glodek A."/>
            <person name="Gong F."/>
            <person name="Gorrell J.H."/>
            <person name="Gu Z."/>
            <person name="Guan P."/>
            <person name="Harris M."/>
            <person name="Harris N.L."/>
            <person name="Harvey D.A."/>
            <person name="Heiman T.J."/>
            <person name="Hernandez J.R."/>
            <person name="Houck J."/>
            <person name="Hostin D."/>
            <person name="Houston K.A."/>
            <person name="Howland T.J."/>
            <person name="Wei M.-H."/>
            <person name="Ibegwam C."/>
            <person name="Jalali M."/>
            <person name="Kalush F."/>
            <person name="Karpen G.H."/>
            <person name="Ke Z."/>
            <person name="Kennison J.A."/>
            <person name="Ketchum K.A."/>
            <person name="Kimmel B.E."/>
            <person name="Kodira C.D."/>
            <person name="Kraft C.L."/>
            <person name="Kravitz S."/>
            <person name="Kulp D."/>
            <person name="Lai Z."/>
            <person name="Lasko P."/>
            <person name="Lei Y."/>
            <person name="Levitsky A.A."/>
            <person name="Li J.H."/>
            <person name="Li Z."/>
            <person name="Liang Y."/>
            <person name="Lin X."/>
            <person name="Liu X."/>
            <person name="Mattei B."/>
            <person name="McIntosh T.C."/>
            <person name="McLeod M.P."/>
            <person name="McPherson D."/>
            <person name="Merkulov G."/>
            <person name="Milshina N.V."/>
            <person name="Mobarry C."/>
            <person name="Morris J."/>
            <person name="Moshrefi A."/>
            <person name="Mount S.M."/>
            <person name="Moy M."/>
            <person name="Murphy B."/>
            <person name="Murphy L."/>
            <person name="Muzny D.M."/>
            <person name="Nelson D.L."/>
            <person name="Nelson D.R."/>
            <person name="Nelson K.A."/>
            <person name="Nixon K."/>
            <person name="Nusskern D.R."/>
            <person name="Pacleb J.M."/>
            <person name="Palazzolo M."/>
            <person name="Pittman G.S."/>
            <person name="Pan S."/>
            <person name="Pollard J."/>
            <person name="Puri V."/>
            <person name="Reese M.G."/>
            <person name="Reinert K."/>
            <person name="Remington K."/>
            <person name="Saunders R.D.C."/>
            <person name="Scheeler F."/>
            <person name="Shen H."/>
            <person name="Shue B.C."/>
            <person name="Siden-Kiamos I."/>
            <person name="Simpson M."/>
            <person name="Skupski M.P."/>
            <person name="Smith T.J."/>
            <person name="Spier E."/>
            <person name="Spradling A.C."/>
            <person name="Stapleton M."/>
            <person name="Strong R."/>
            <person name="Sun E."/>
            <person name="Svirskas R."/>
            <person name="Tector C."/>
            <person name="Turner R."/>
            <person name="Venter E."/>
            <person name="Wang A.H."/>
            <person name="Wang X."/>
            <person name="Wang Z.-Y."/>
            <person name="Wassarman D.A."/>
            <person name="Weinstock G.M."/>
            <person name="Weissenbach J."/>
            <person name="Williams S.M."/>
            <person name="Woodage T."/>
            <person name="Worley K.C."/>
            <person name="Wu D."/>
            <person name="Yang S."/>
            <person name="Yao Q.A."/>
            <person name="Ye J."/>
            <person name="Yeh R.-F."/>
            <person name="Zaveri J.S."/>
            <person name="Zhan M."/>
            <person name="Zhang G."/>
            <person name="Zhao Q."/>
            <person name="Zheng L."/>
            <person name="Zheng X.H."/>
            <person name="Zhong F.N."/>
            <person name="Zhong W."/>
            <person name="Zhou X."/>
            <person name="Zhu S.C."/>
            <person name="Zhu X."/>
            <person name="Smith H.O."/>
            <person name="Gibbs R.A."/>
            <person name="Myers E.W."/>
            <person name="Rubin G.M."/>
            <person name="Venter J.C."/>
        </authorList>
    </citation>
    <scope>NUCLEOTIDE SEQUENCE [LARGE SCALE GENOMIC DNA]</scope>
    <source>
        <strain evidence="3">Berkeley</strain>
    </source>
</reference>
<reference evidence="5" key="2">
    <citation type="journal article" date="2002" name="Genome Biol.">
        <title>Annotation of the Drosophila melanogaster euchromatic genome: a systematic review.</title>
        <authorList>
            <person name="Misra S."/>
            <person name="Crosby M.A."/>
            <person name="Mungall C.J."/>
            <person name="Matthews B.B."/>
            <person name="Campbell K.S."/>
            <person name="Hradecky P."/>
            <person name="Huang Y."/>
            <person name="Kaminker J.S."/>
            <person name="Millburn G.H."/>
            <person name="Prochnik S.E."/>
            <person name="Smith C.D."/>
            <person name="Tupy J.L."/>
            <person name="Whitfield E.J."/>
            <person name="Bayraktaroglu L."/>
            <person name="Berman B.P."/>
            <person name="Bettencourt B.R."/>
            <person name="Celniker S.E."/>
            <person name="de Grey A.D.N.J."/>
            <person name="Drysdale R.A."/>
            <person name="Harris N.L."/>
            <person name="Richter J."/>
            <person name="Russo S."/>
            <person name="Schroeder A.J."/>
            <person name="Shu S.Q."/>
            <person name="Stapleton M."/>
            <person name="Yamada C."/>
            <person name="Ashburner M."/>
            <person name="Gelbart W.M."/>
            <person name="Rubin G.M."/>
            <person name="Lewis S.E."/>
        </authorList>
    </citation>
    <scope>GENOME REANNOTATION</scope>
    <source>
        <strain>Berkeley</strain>
    </source>
</reference>
<reference evidence="5" key="3">
    <citation type="journal article" date="2001" name="Curr. Biol.">
        <title>Spatially restricted expression of candidate taste receptors in the Drosophila gustatory system.</title>
        <authorList>
            <person name="Dunipace L."/>
            <person name="Meister S."/>
            <person name="McNealy C."/>
            <person name="Amrein H."/>
        </authorList>
    </citation>
    <scope>IDENTIFICATION</scope>
</reference>
<reference key="4">
    <citation type="journal article" date="2011" name="J. Neurosci.">
        <title>Molecular and cellular organization of the taste system in the Drosophila larva.</title>
        <authorList>
            <person name="Kwon J.Y."/>
            <person name="Dahanukar A."/>
            <person name="Weiss L.A."/>
            <person name="Carlson J.R."/>
        </authorList>
    </citation>
    <scope>TISSUE SPECIFICITY</scope>
</reference>
<accession>Q9VJF2</accession>
<keyword id="KW-1003">Cell membrane</keyword>
<keyword id="KW-0472">Membrane</keyword>
<keyword id="KW-0675">Receptor</keyword>
<keyword id="KW-1185">Reference proteome</keyword>
<keyword id="KW-0807">Transducer</keyword>
<keyword id="KW-0812">Transmembrane</keyword>
<keyword id="KW-1133">Transmembrane helix</keyword>
<protein>
    <recommendedName>
        <fullName>Putative gustatory receptor 36b</fullName>
    </recommendedName>
</protein>
<evidence type="ECO:0000250" key="1"/>
<evidence type="ECO:0000255" key="2"/>
<evidence type="ECO:0000269" key="3">
    <source>
    </source>
</evidence>
<evidence type="ECO:0000269" key="4">
    <source>
    </source>
</evidence>
<evidence type="ECO:0000305" key="5"/>
<evidence type="ECO:0000312" key="6">
    <source>
        <dbReference type="EMBL" id="AAF53597.2"/>
    </source>
</evidence>
<proteinExistence type="evidence at transcript level"/>
<feature type="chain" id="PRO_0000216506" description="Putative gustatory receptor 36b">
    <location>
        <begin position="1"/>
        <end position="391"/>
    </location>
</feature>
<feature type="topological domain" description="Cytoplasmic" evidence="1">
    <location>
        <begin position="1"/>
        <end position="4"/>
    </location>
</feature>
<feature type="transmembrane region" description="Helical; Name=1" evidence="2">
    <location>
        <begin position="5"/>
        <end position="25"/>
    </location>
</feature>
<feature type="topological domain" description="Extracellular" evidence="1">
    <location>
        <begin position="26"/>
        <end position="39"/>
    </location>
</feature>
<feature type="transmembrane region" description="Helical; Name=2" evidence="2">
    <location>
        <begin position="40"/>
        <end position="60"/>
    </location>
</feature>
<feature type="topological domain" description="Cytoplasmic" evidence="1">
    <location>
        <begin position="61"/>
        <end position="74"/>
    </location>
</feature>
<feature type="transmembrane region" description="Helical; Name=3" evidence="2">
    <location>
        <begin position="75"/>
        <end position="95"/>
    </location>
</feature>
<feature type="topological domain" description="Extracellular" evidence="1">
    <location>
        <begin position="96"/>
        <end position="127"/>
    </location>
</feature>
<feature type="transmembrane region" description="Helical; Name=4" evidence="2">
    <location>
        <begin position="128"/>
        <end position="148"/>
    </location>
</feature>
<feature type="topological domain" description="Cytoplasmic" evidence="1">
    <location>
        <begin position="149"/>
        <end position="165"/>
    </location>
</feature>
<feature type="transmembrane region" description="Helical; Name=5" evidence="2">
    <location>
        <begin position="166"/>
        <end position="186"/>
    </location>
</feature>
<feature type="topological domain" description="Extracellular" evidence="1">
    <location>
        <begin position="187"/>
        <end position="284"/>
    </location>
</feature>
<feature type="transmembrane region" description="Helical; Name=6" evidence="2">
    <location>
        <begin position="285"/>
        <end position="305"/>
    </location>
</feature>
<feature type="topological domain" description="Cytoplasmic" evidence="1">
    <location>
        <begin position="306"/>
        <end position="363"/>
    </location>
</feature>
<feature type="transmembrane region" description="Helical; Name=7" evidence="2">
    <location>
        <begin position="364"/>
        <end position="384"/>
    </location>
</feature>
<feature type="topological domain" description="Extracellular" evidence="1">
    <location>
        <begin position="385"/>
        <end position="391"/>
    </location>
</feature>
<dbReference type="EMBL" id="AE014134">
    <property type="protein sequence ID" value="AAF53597.2"/>
    <property type="molecule type" value="Genomic_DNA"/>
</dbReference>
<dbReference type="RefSeq" id="NP_724039.1">
    <property type="nucleotide sequence ID" value="NM_165206.1"/>
</dbReference>
<dbReference type="SMR" id="Q9VJF2"/>
<dbReference type="FunCoup" id="Q9VJF2">
    <property type="interactions" value="12"/>
</dbReference>
<dbReference type="STRING" id="7227.FBpp0080516"/>
<dbReference type="PaxDb" id="7227-FBpp0080516"/>
<dbReference type="EnsemblMetazoa" id="FBtr0080963">
    <property type="protein sequence ID" value="FBpp0080516"/>
    <property type="gene ID" value="FBgn0045486"/>
</dbReference>
<dbReference type="GeneID" id="117487"/>
<dbReference type="KEGG" id="dme:Dmel_CG31744"/>
<dbReference type="AGR" id="FB:FBgn0045486"/>
<dbReference type="CTD" id="117487"/>
<dbReference type="FlyBase" id="FBgn0045486">
    <property type="gene designation" value="Gr36b"/>
</dbReference>
<dbReference type="VEuPathDB" id="VectorBase:FBgn0045486"/>
<dbReference type="GeneTree" id="ENSGT00540000073531"/>
<dbReference type="HOGENOM" id="CLU_058694_0_0_1"/>
<dbReference type="InParanoid" id="Q9VJF2"/>
<dbReference type="OMA" id="WRCTIYA"/>
<dbReference type="OrthoDB" id="7856336at2759"/>
<dbReference type="PhylomeDB" id="Q9VJF2"/>
<dbReference type="BioGRID-ORCS" id="117487">
    <property type="hits" value="0 hits in 1 CRISPR screen"/>
</dbReference>
<dbReference type="GenomeRNAi" id="117487"/>
<dbReference type="PRO" id="PR:Q9VJF2"/>
<dbReference type="Proteomes" id="UP000000803">
    <property type="component" value="Chromosome 2L"/>
</dbReference>
<dbReference type="GO" id="GO:0030424">
    <property type="term" value="C:axon"/>
    <property type="evidence" value="ECO:0000318"/>
    <property type="project" value="GO_Central"/>
</dbReference>
<dbReference type="GO" id="GO:0030425">
    <property type="term" value="C:dendrite"/>
    <property type="evidence" value="ECO:0000318"/>
    <property type="project" value="GO_Central"/>
</dbReference>
<dbReference type="GO" id="GO:0016020">
    <property type="term" value="C:membrane"/>
    <property type="evidence" value="ECO:0000303"/>
    <property type="project" value="UniProtKB"/>
</dbReference>
<dbReference type="GO" id="GO:0043025">
    <property type="term" value="C:neuronal cell body"/>
    <property type="evidence" value="ECO:0000318"/>
    <property type="project" value="GO_Central"/>
</dbReference>
<dbReference type="GO" id="GO:0005886">
    <property type="term" value="C:plasma membrane"/>
    <property type="evidence" value="ECO:0000250"/>
    <property type="project" value="FlyBase"/>
</dbReference>
<dbReference type="GO" id="GO:0015276">
    <property type="term" value="F:ligand-gated monoatomic ion channel activity"/>
    <property type="evidence" value="ECO:0000250"/>
    <property type="project" value="FlyBase"/>
</dbReference>
<dbReference type="GO" id="GO:0008527">
    <property type="term" value="F:taste receptor activity"/>
    <property type="evidence" value="ECO:0000303"/>
    <property type="project" value="UniProtKB"/>
</dbReference>
<dbReference type="GO" id="GO:0034220">
    <property type="term" value="P:monoatomic ion transmembrane transport"/>
    <property type="evidence" value="ECO:0000250"/>
    <property type="project" value="FlyBase"/>
</dbReference>
<dbReference type="GO" id="GO:0050909">
    <property type="term" value="P:sensory perception of taste"/>
    <property type="evidence" value="ECO:0000303"/>
    <property type="project" value="UniProtKB"/>
</dbReference>
<dbReference type="GO" id="GO:0007165">
    <property type="term" value="P:signal transduction"/>
    <property type="evidence" value="ECO:0007669"/>
    <property type="project" value="UniProtKB-KW"/>
</dbReference>
<dbReference type="InterPro" id="IPR013604">
    <property type="entry name" value="7TM_chemorcpt"/>
</dbReference>
<dbReference type="Pfam" id="PF08395">
    <property type="entry name" value="7tm_7"/>
    <property type="match status" value="1"/>
</dbReference>